<organism>
    <name type="scientific">Escherichia coli (strain SMS-3-5 / SECEC)</name>
    <dbReference type="NCBI Taxonomy" id="439855"/>
    <lineage>
        <taxon>Bacteria</taxon>
        <taxon>Pseudomonadati</taxon>
        <taxon>Pseudomonadota</taxon>
        <taxon>Gammaproteobacteria</taxon>
        <taxon>Enterobacterales</taxon>
        <taxon>Enterobacteriaceae</taxon>
        <taxon>Escherichia</taxon>
    </lineage>
</organism>
<reference key="1">
    <citation type="journal article" date="2008" name="J. Bacteriol.">
        <title>Insights into the environmental resistance gene pool from the genome sequence of the multidrug-resistant environmental isolate Escherichia coli SMS-3-5.</title>
        <authorList>
            <person name="Fricke W.F."/>
            <person name="Wright M.S."/>
            <person name="Lindell A.H."/>
            <person name="Harkins D.M."/>
            <person name="Baker-Austin C."/>
            <person name="Ravel J."/>
            <person name="Stepanauskas R."/>
        </authorList>
    </citation>
    <scope>NUCLEOTIDE SEQUENCE [LARGE SCALE GENOMIC DNA]</scope>
    <source>
        <strain>SMS-3-5 / SECEC</strain>
    </source>
</reference>
<sequence length="369" mass="39391">MKSRAAVAFAPGKPLEIVEIDVAPPKKGEVLIKVTHTGVCHTDAFTLSGDDPEGVFPVVLGHEGAGVVVEVGEGVTSVKPGDHVIPLYTAECGECEFCRSGKTNLCVAVRETQGKGLMPDGTTRFSYNGQPLYHYMGCSTFSEYTVVAEVSLAKINPEANHEHVCLLGCGVTTGIGAVHNTAKVQPDDSVAVFGLGAIGLAVVQGARQAKAGRIIAIDTNPKKFDLARRFGATDCINPNDYDKPIKDVLLDINKWGIDHTFECIGNVNVMRAALESAHRGWGQSVIIGVAGSGQEISTRPFQLVTGRVWKGSAFGGVKGRSQLPGMVEDAMKGDIDLEPFVTHTMSLDEINDAFDLMHEGKSIRTVIRY</sequence>
<accession>B1LIP1</accession>
<gene>
    <name type="primary">frmA</name>
    <name type="ordered locus">EcSMS35_0387</name>
</gene>
<feature type="chain" id="PRO_0000341284" description="S-(hydroxymethyl)glutathione dehydrogenase">
    <location>
        <begin position="1"/>
        <end position="369"/>
    </location>
</feature>
<feature type="binding site" evidence="1">
    <location>
        <position position="40"/>
    </location>
    <ligand>
        <name>Zn(2+)</name>
        <dbReference type="ChEBI" id="CHEBI:29105"/>
        <label>1</label>
        <note>catalytic</note>
    </ligand>
</feature>
<feature type="binding site" evidence="1">
    <location>
        <position position="62"/>
    </location>
    <ligand>
        <name>Zn(2+)</name>
        <dbReference type="ChEBI" id="CHEBI:29105"/>
        <label>1</label>
        <note>catalytic</note>
    </ligand>
</feature>
<feature type="binding site" evidence="1">
    <location>
        <position position="92"/>
    </location>
    <ligand>
        <name>Zn(2+)</name>
        <dbReference type="ChEBI" id="CHEBI:29105"/>
        <label>2</label>
    </ligand>
</feature>
<feature type="binding site" evidence="1">
    <location>
        <position position="95"/>
    </location>
    <ligand>
        <name>Zn(2+)</name>
        <dbReference type="ChEBI" id="CHEBI:29105"/>
        <label>2</label>
    </ligand>
</feature>
<feature type="binding site" evidence="1">
    <location>
        <position position="98"/>
    </location>
    <ligand>
        <name>Zn(2+)</name>
        <dbReference type="ChEBI" id="CHEBI:29105"/>
        <label>2</label>
    </ligand>
</feature>
<feature type="binding site" evidence="1">
    <location>
        <position position="106"/>
    </location>
    <ligand>
        <name>Zn(2+)</name>
        <dbReference type="ChEBI" id="CHEBI:29105"/>
        <label>2</label>
    </ligand>
</feature>
<feature type="binding site" evidence="1">
    <location>
        <position position="169"/>
    </location>
    <ligand>
        <name>Zn(2+)</name>
        <dbReference type="ChEBI" id="CHEBI:29105"/>
        <label>1</label>
        <note>catalytic</note>
    </ligand>
</feature>
<proteinExistence type="inferred from homology"/>
<name>FRMA_ECOSM</name>
<protein>
    <recommendedName>
        <fullName>S-(hydroxymethyl)glutathione dehydrogenase</fullName>
        <ecNumber>1.1.1.284</ecNumber>
    </recommendedName>
    <alternativeName>
        <fullName>Alcohol dehydrogenase class-3</fullName>
        <ecNumber>1.1.1.1</ecNumber>
    </alternativeName>
    <alternativeName>
        <fullName>Alcohol dehydrogenase class-III</fullName>
    </alternativeName>
    <alternativeName>
        <fullName>Glutathione-dependent formaldehyde dehydrogenase</fullName>
        <shortName>FALDH</shortName>
        <shortName>FDH</shortName>
        <shortName>GSH-FDH</shortName>
        <ecNumber>1.1.1.-</ecNumber>
    </alternativeName>
</protein>
<dbReference type="EC" id="1.1.1.284"/>
<dbReference type="EC" id="1.1.1.1"/>
<dbReference type="EC" id="1.1.1.-"/>
<dbReference type="EMBL" id="CP000970">
    <property type="protein sequence ID" value="ACB18273.1"/>
    <property type="molecule type" value="Genomic_DNA"/>
</dbReference>
<dbReference type="RefSeq" id="WP_000842092.1">
    <property type="nucleotide sequence ID" value="NC_010498.1"/>
</dbReference>
<dbReference type="SMR" id="B1LIP1"/>
<dbReference type="KEGG" id="ecm:EcSMS35_0387"/>
<dbReference type="HOGENOM" id="CLU_026673_14_0_6"/>
<dbReference type="Proteomes" id="UP000007011">
    <property type="component" value="Chromosome"/>
</dbReference>
<dbReference type="GO" id="GO:0005829">
    <property type="term" value="C:cytosol"/>
    <property type="evidence" value="ECO:0007669"/>
    <property type="project" value="TreeGrafter"/>
</dbReference>
<dbReference type="GO" id="GO:0004022">
    <property type="term" value="F:alcohol dehydrogenase (NAD+) activity"/>
    <property type="evidence" value="ECO:0007669"/>
    <property type="project" value="UniProtKB-EC"/>
</dbReference>
<dbReference type="GO" id="GO:0106322">
    <property type="term" value="F:S-(hydroxymethyl)glutathione dehydrogenase (NAD+) activity"/>
    <property type="evidence" value="ECO:0007669"/>
    <property type="project" value="RHEA"/>
</dbReference>
<dbReference type="GO" id="GO:0106321">
    <property type="term" value="F:S-(hydroxymethyl)glutathione dehydrogenase (NADP+) activity"/>
    <property type="evidence" value="ECO:0007669"/>
    <property type="project" value="RHEA"/>
</dbReference>
<dbReference type="GO" id="GO:0080007">
    <property type="term" value="F:S-nitrosoglutathione reductase (NADH) activity"/>
    <property type="evidence" value="ECO:0007669"/>
    <property type="project" value="RHEA"/>
</dbReference>
<dbReference type="GO" id="GO:0008270">
    <property type="term" value="F:zinc ion binding"/>
    <property type="evidence" value="ECO:0007669"/>
    <property type="project" value="InterPro"/>
</dbReference>
<dbReference type="GO" id="GO:0046294">
    <property type="term" value="P:formaldehyde catabolic process"/>
    <property type="evidence" value="ECO:0007669"/>
    <property type="project" value="InterPro"/>
</dbReference>
<dbReference type="CDD" id="cd08300">
    <property type="entry name" value="alcohol_DH_class_III"/>
    <property type="match status" value="1"/>
</dbReference>
<dbReference type="FunFam" id="3.40.50.720:FF:000003">
    <property type="entry name" value="S-(hydroxymethyl)glutathione dehydrogenase"/>
    <property type="match status" value="1"/>
</dbReference>
<dbReference type="FunFam" id="3.90.180.10:FF:000001">
    <property type="entry name" value="S-(hydroxymethyl)glutathione dehydrogenase"/>
    <property type="match status" value="1"/>
</dbReference>
<dbReference type="Gene3D" id="3.90.180.10">
    <property type="entry name" value="Medium-chain alcohol dehydrogenases, catalytic domain"/>
    <property type="match status" value="1"/>
</dbReference>
<dbReference type="Gene3D" id="3.40.50.720">
    <property type="entry name" value="NAD(P)-binding Rossmann-like Domain"/>
    <property type="match status" value="1"/>
</dbReference>
<dbReference type="InterPro" id="IPR013149">
    <property type="entry name" value="ADH-like_C"/>
</dbReference>
<dbReference type="InterPro" id="IPR013154">
    <property type="entry name" value="ADH-like_N"/>
</dbReference>
<dbReference type="InterPro" id="IPR014183">
    <property type="entry name" value="ADH_3"/>
</dbReference>
<dbReference type="InterPro" id="IPR002328">
    <property type="entry name" value="ADH_Zn_CS"/>
</dbReference>
<dbReference type="InterPro" id="IPR011032">
    <property type="entry name" value="GroES-like_sf"/>
</dbReference>
<dbReference type="InterPro" id="IPR036291">
    <property type="entry name" value="NAD(P)-bd_dom_sf"/>
</dbReference>
<dbReference type="InterPro" id="IPR020843">
    <property type="entry name" value="PKS_ER"/>
</dbReference>
<dbReference type="NCBIfam" id="TIGR02818">
    <property type="entry name" value="adh_III_F_hyde"/>
    <property type="match status" value="1"/>
</dbReference>
<dbReference type="PANTHER" id="PTHR43880">
    <property type="entry name" value="ALCOHOL DEHYDROGENASE"/>
    <property type="match status" value="1"/>
</dbReference>
<dbReference type="PANTHER" id="PTHR43880:SF12">
    <property type="entry name" value="ALCOHOL DEHYDROGENASE CLASS-3"/>
    <property type="match status" value="1"/>
</dbReference>
<dbReference type="Pfam" id="PF08240">
    <property type="entry name" value="ADH_N"/>
    <property type="match status" value="1"/>
</dbReference>
<dbReference type="Pfam" id="PF00107">
    <property type="entry name" value="ADH_zinc_N"/>
    <property type="match status" value="1"/>
</dbReference>
<dbReference type="SMART" id="SM00829">
    <property type="entry name" value="PKS_ER"/>
    <property type="match status" value="1"/>
</dbReference>
<dbReference type="SUPFAM" id="SSF50129">
    <property type="entry name" value="GroES-like"/>
    <property type="match status" value="2"/>
</dbReference>
<dbReference type="SUPFAM" id="SSF51735">
    <property type="entry name" value="NAD(P)-binding Rossmann-fold domains"/>
    <property type="match status" value="1"/>
</dbReference>
<dbReference type="PROSITE" id="PS00059">
    <property type="entry name" value="ADH_ZINC"/>
    <property type="match status" value="1"/>
</dbReference>
<keyword id="KW-0963">Cytoplasm</keyword>
<keyword id="KW-0479">Metal-binding</keyword>
<keyword id="KW-0520">NAD</keyword>
<keyword id="KW-0560">Oxidoreductase</keyword>
<keyword id="KW-0862">Zinc</keyword>
<evidence type="ECO:0000250" key="1">
    <source>
        <dbReference type="UniProtKB" id="P11766"/>
    </source>
</evidence>
<evidence type="ECO:0000250" key="2">
    <source>
        <dbReference type="UniProtKB" id="P25437"/>
    </source>
</evidence>
<evidence type="ECO:0000305" key="3"/>
<comment type="function">
    <text evidence="2">Has high formaldehyde dehydrogenase activity in the presence of glutathione and catalyzes the oxidation of normal alcohols in a reaction that is not GSH-dependent. In addition, hemithiolacetals other than those formed from GSH, including omega-thiol fatty acids, also are substrates. Also acts as a S-nitroso-glutathione reductase by catalyzing the NADH-dependent reduction of S-nitrosoglutathione.</text>
</comment>
<comment type="catalytic activity">
    <reaction evidence="2">
        <text>S-(hydroxymethyl)glutathione + NADP(+) = S-formylglutathione + NADPH + H(+)</text>
        <dbReference type="Rhea" id="RHEA:19981"/>
        <dbReference type="ChEBI" id="CHEBI:15378"/>
        <dbReference type="ChEBI" id="CHEBI:57688"/>
        <dbReference type="ChEBI" id="CHEBI:57783"/>
        <dbReference type="ChEBI" id="CHEBI:58349"/>
        <dbReference type="ChEBI" id="CHEBI:58758"/>
        <dbReference type="EC" id="1.1.1.284"/>
    </reaction>
</comment>
<comment type="catalytic activity">
    <reaction evidence="2">
        <text>S-(hydroxymethyl)glutathione + NAD(+) = S-formylglutathione + NADH + H(+)</text>
        <dbReference type="Rhea" id="RHEA:19985"/>
        <dbReference type="ChEBI" id="CHEBI:15378"/>
        <dbReference type="ChEBI" id="CHEBI:57540"/>
        <dbReference type="ChEBI" id="CHEBI:57688"/>
        <dbReference type="ChEBI" id="CHEBI:57945"/>
        <dbReference type="ChEBI" id="CHEBI:58758"/>
        <dbReference type="EC" id="1.1.1.284"/>
    </reaction>
</comment>
<comment type="catalytic activity">
    <reaction evidence="2">
        <text>a primary alcohol + NAD(+) = an aldehyde + NADH + H(+)</text>
        <dbReference type="Rhea" id="RHEA:10736"/>
        <dbReference type="ChEBI" id="CHEBI:15378"/>
        <dbReference type="ChEBI" id="CHEBI:15734"/>
        <dbReference type="ChEBI" id="CHEBI:17478"/>
        <dbReference type="ChEBI" id="CHEBI:57540"/>
        <dbReference type="ChEBI" id="CHEBI:57945"/>
        <dbReference type="EC" id="1.1.1.1"/>
    </reaction>
</comment>
<comment type="catalytic activity">
    <reaction evidence="2">
        <text>a secondary alcohol + NAD(+) = a ketone + NADH + H(+)</text>
        <dbReference type="Rhea" id="RHEA:10740"/>
        <dbReference type="ChEBI" id="CHEBI:15378"/>
        <dbReference type="ChEBI" id="CHEBI:17087"/>
        <dbReference type="ChEBI" id="CHEBI:35681"/>
        <dbReference type="ChEBI" id="CHEBI:57540"/>
        <dbReference type="ChEBI" id="CHEBI:57945"/>
        <dbReference type="EC" id="1.1.1.1"/>
    </reaction>
</comment>
<comment type="catalytic activity">
    <reaction evidence="2">
        <text>S-nitrosoglutathione + NADH + H(+) = S-(hydroxysulfenamide)glutathione + NAD(+)</text>
        <dbReference type="Rhea" id="RHEA:78371"/>
        <dbReference type="ChEBI" id="CHEBI:15378"/>
        <dbReference type="ChEBI" id="CHEBI:57540"/>
        <dbReference type="ChEBI" id="CHEBI:57945"/>
        <dbReference type="ChEBI" id="CHEBI:145544"/>
        <dbReference type="ChEBI" id="CHEBI:229723"/>
    </reaction>
    <physiologicalReaction direction="left-to-right" evidence="2">
        <dbReference type="Rhea" id="RHEA:78372"/>
    </physiologicalReaction>
</comment>
<comment type="cofactor">
    <cofactor evidence="1">
        <name>Zn(2+)</name>
        <dbReference type="ChEBI" id="CHEBI:29105"/>
    </cofactor>
    <text evidence="1">Binds 2 Zn(2+) ions per subunit.</text>
</comment>
<comment type="subunit">
    <text evidence="2">Homodimer.</text>
</comment>
<comment type="subcellular location">
    <subcellularLocation>
        <location evidence="2">Cytoplasm</location>
    </subcellularLocation>
</comment>
<comment type="similarity">
    <text evidence="3">Belongs to the zinc-containing alcohol dehydrogenase family. Class-III subfamily.</text>
</comment>